<organism>
    <name type="scientific">Invertebrate iridescent virus 3</name>
    <name type="common">IIV-3</name>
    <name type="synonym">Mosquito iridescent virus</name>
    <dbReference type="NCBI Taxonomy" id="345201"/>
    <lineage>
        <taxon>Viruses</taxon>
        <taxon>Varidnaviria</taxon>
        <taxon>Bamfordvirae</taxon>
        <taxon>Nucleocytoviricota</taxon>
        <taxon>Megaviricetes</taxon>
        <taxon>Pimascovirales</taxon>
        <taxon>Iridoviridae</taxon>
        <taxon>Betairidovirinae</taxon>
        <taxon>Chloriridovirus</taxon>
    </lineage>
</organism>
<organismHost>
    <name type="scientific">Aedes vexans</name>
    <name type="common">Inland floodwater mosquito</name>
    <name type="synonym">Culex vexans</name>
    <dbReference type="NCBI Taxonomy" id="7163"/>
</organismHost>
<organismHost>
    <name type="scientific">Culex territans</name>
    <dbReference type="NCBI Taxonomy" id="42431"/>
</organismHost>
<organismHost>
    <name type="scientific">Culiseta annulata</name>
    <dbReference type="NCBI Taxonomy" id="332058"/>
</organismHost>
<organismHost>
    <name type="scientific">Ochlerotatus sollicitans</name>
    <name type="common">eastern saltmarsh mosquito</name>
    <dbReference type="NCBI Taxonomy" id="310513"/>
</organismHost>
<organismHost>
    <name type="scientific">Ochlerotatus taeniorhynchus</name>
    <name type="common">Black salt marsh mosquito</name>
    <name type="synonym">Aedes taeniorhynchus</name>
    <dbReference type="NCBI Taxonomy" id="329105"/>
</organismHost>
<organismHost>
    <name type="scientific">Psorophora ferox</name>
    <dbReference type="NCBI Taxonomy" id="7183"/>
</organismHost>
<keyword id="KW-0067">ATP-binding</keyword>
<keyword id="KW-0347">Helicase</keyword>
<keyword id="KW-0378">Hydrolase</keyword>
<keyword id="KW-0547">Nucleotide-binding</keyword>
<keyword id="KW-1185">Reference proteome</keyword>
<keyword id="KW-0677">Repeat</keyword>
<sequence>MDYNLYDFLPLYHPVQTPAFDRDVNSLSEFTQYELPREEEFPQNPGDLMLHQKLISNFINPHTLYDGVLLVHEMGTGKTCTSVAVAEEFIKNNYSSGETYPYTMVKKIIVLTKGKGLQNNFVNEIANVCTWGQYLEGLDRYIRNRDKKIKKNVKVHYTFDTFEIFAKNLAKMSTNEKRMTYENSLFIVDEAHNLRLHSDPEEGNIYSEIYDLFHLLKSRKILLLTGTPMKDRPEEIIDLFNLILRTPLSVEDLDQPEQFKRKINGHVSYLRAMISDVDRREMGKKLGSLNHFRVQPVVMGDFQSQIYQLAKAKDDEEKSIFNNSRQSSAMVFPDGTYGKQGFEANILPTTSGHKLKPEIRDELRLNLRKYSAKYADLIDRLKVDYTEGRLSFVFSEFVKGSGLVALGLLLELNGYVKATPSSNFAKPQKRYAIFTNETSTDAQTKQLISAFNNPKNLKGEYISTILGSRVIMEGFSFKNIQSEYILSPHWNYSETSQIIARGLRLGSHNDLKKNNIKFEVRIYHYVSLANKNYPAESIDLHMYEIAEEKDLEIQKILRYIKEAAFDCRLNQQRNTITNRKFDGTRNCEYSSCSYECSNQVDIGHDNRNYRLLYFQSADQYEKLKATIIETASRQPFTIEQIVAETKHSEFEVMTVIESLLNYRKVLFTRPEGYYYLSNIKNLFFASNVVFDRDKHYDSNDPTLLNYYTKYTTVYMGKSIGQLIQENQQKYMVFLVKKIFKSKNLVELQKYMVQLPIYLQEKLLSYSISVRHQDIKNNFVRDMVLNNFKLYYKIQDPQAFIWLNPENFLCTANYRDPDQWKPCTPSQQRDIEYMKRDRANIKVSNNSYGFIGLLNRKTNDFCLKKLQGPTLSDEPTDKRKRNVGKRCQNWKKVDLVDLVANKLKVVPDEDFDFTAEDANTVKNNPKFKKLVTPEMDQNDLKRLAFWNAQDVNHLCRTTLTQFTAQKLVVDDPNCGTANKIR</sequence>
<dbReference type="EC" id="3.6.4.-"/>
<dbReference type="EMBL" id="DQ643392">
    <property type="protein sequence ID" value="ABF82117.1"/>
    <property type="molecule type" value="Genomic_DNA"/>
</dbReference>
<dbReference type="RefSeq" id="YP_654659.1">
    <property type="nucleotide sequence ID" value="NC_008187.1"/>
</dbReference>
<dbReference type="KEGG" id="vg:4156231"/>
<dbReference type="OrthoDB" id="605at10239"/>
<dbReference type="Proteomes" id="UP000001358">
    <property type="component" value="Genome"/>
</dbReference>
<dbReference type="GO" id="GO:0005524">
    <property type="term" value="F:ATP binding"/>
    <property type="evidence" value="ECO:0007669"/>
    <property type="project" value="UniProtKB-KW"/>
</dbReference>
<dbReference type="GO" id="GO:0004386">
    <property type="term" value="F:helicase activity"/>
    <property type="evidence" value="ECO:0007669"/>
    <property type="project" value="UniProtKB-KW"/>
</dbReference>
<dbReference type="GO" id="GO:0016787">
    <property type="term" value="F:hydrolase activity"/>
    <property type="evidence" value="ECO:0007669"/>
    <property type="project" value="UniProtKB-KW"/>
</dbReference>
<dbReference type="Gene3D" id="3.40.50.300">
    <property type="entry name" value="P-loop containing nucleotide triphosphate hydrolases"/>
    <property type="match status" value="2"/>
</dbReference>
<dbReference type="InterPro" id="IPR002464">
    <property type="entry name" value="DNA/RNA_helicase_DEAH_CS"/>
</dbReference>
<dbReference type="InterPro" id="IPR014001">
    <property type="entry name" value="Helicase_ATP-bd"/>
</dbReference>
<dbReference type="InterPro" id="IPR027417">
    <property type="entry name" value="P-loop_NTPase"/>
</dbReference>
<dbReference type="InterPro" id="IPR000330">
    <property type="entry name" value="SNF2_N"/>
</dbReference>
<dbReference type="InterPro" id="IPR050496">
    <property type="entry name" value="SNF2_RAD54_helicase_repair"/>
</dbReference>
<dbReference type="PANTHER" id="PTHR45629:SF7">
    <property type="entry name" value="DNA EXCISION REPAIR PROTEIN ERCC-6-RELATED"/>
    <property type="match status" value="1"/>
</dbReference>
<dbReference type="PANTHER" id="PTHR45629">
    <property type="entry name" value="SNF2/RAD54 FAMILY MEMBER"/>
    <property type="match status" value="1"/>
</dbReference>
<dbReference type="Pfam" id="PF00176">
    <property type="entry name" value="SNF2-rel_dom"/>
    <property type="match status" value="1"/>
</dbReference>
<dbReference type="SMART" id="SM00487">
    <property type="entry name" value="DEXDc"/>
    <property type="match status" value="1"/>
</dbReference>
<dbReference type="SUPFAM" id="SSF52540">
    <property type="entry name" value="P-loop containing nucleoside triphosphate hydrolases"/>
    <property type="match status" value="2"/>
</dbReference>
<dbReference type="PROSITE" id="PS00690">
    <property type="entry name" value="DEAH_ATP_HELICASE"/>
    <property type="match status" value="1"/>
</dbReference>
<dbReference type="PROSITE" id="PS51192">
    <property type="entry name" value="HELICASE_ATP_BIND_1"/>
    <property type="match status" value="1"/>
</dbReference>
<protein>
    <recommendedName>
        <fullName>Putative helicase 087L</fullName>
        <ecNumber>3.6.4.-</ecNumber>
    </recommendedName>
</protein>
<accession>Q196X3</accession>
<evidence type="ECO:0000255" key="1">
    <source>
        <dbReference type="PROSITE-ProRule" id="PRU00541"/>
    </source>
</evidence>
<evidence type="ECO:0000305" key="2"/>
<comment type="similarity">
    <text evidence="2">Belongs to the IIV-6 022L family. SNF2/RAD54 helicase subfamily.</text>
</comment>
<feature type="chain" id="PRO_0000376940" description="Putative helicase 087L">
    <location>
        <begin position="1"/>
        <end position="980"/>
    </location>
</feature>
<feature type="domain" description="Helicase ATP-binding" evidence="1">
    <location>
        <begin position="59"/>
        <end position="246"/>
    </location>
</feature>
<feature type="domain" description="Helicase C-terminal">
    <location>
        <begin position="389"/>
        <end position="546"/>
    </location>
</feature>
<feature type="short sequence motif" description="DEAH box">
    <location>
        <begin position="189"/>
        <end position="192"/>
    </location>
</feature>
<feature type="binding site" evidence="1">
    <location>
        <begin position="72"/>
        <end position="79"/>
    </location>
    <ligand>
        <name>ATP</name>
        <dbReference type="ChEBI" id="CHEBI:30616"/>
    </ligand>
</feature>
<name>VF022_IIV3</name>
<gene>
    <name type="ORF">IIV3-087L</name>
</gene>
<proteinExistence type="inferred from homology"/>
<reference key="1">
    <citation type="journal article" date="2006" name="J. Virol.">
        <title>Genome of invertebrate iridescent virus type 3 (mosquito iridescent virus).</title>
        <authorList>
            <person name="Delhon G."/>
            <person name="Tulman E.R."/>
            <person name="Afonso C.L."/>
            <person name="Lu Z."/>
            <person name="Becnel J.J."/>
            <person name="Moser B.A."/>
            <person name="Kutish G.F."/>
            <person name="Rock D.L."/>
        </authorList>
    </citation>
    <scope>NUCLEOTIDE SEQUENCE [LARGE SCALE GENOMIC DNA]</scope>
</reference>